<dbReference type="GO" id="GO:0062129">
    <property type="term" value="C:chitin-based extracellular matrix"/>
    <property type="evidence" value="ECO:0007669"/>
    <property type="project" value="TreeGrafter"/>
</dbReference>
<dbReference type="GO" id="GO:0008010">
    <property type="term" value="F:structural constituent of chitin-based larval cuticle"/>
    <property type="evidence" value="ECO:0007669"/>
    <property type="project" value="TreeGrafter"/>
</dbReference>
<dbReference type="InterPro" id="IPR031311">
    <property type="entry name" value="CHIT_BIND_RR_consensus"/>
</dbReference>
<dbReference type="InterPro" id="IPR050468">
    <property type="entry name" value="Cuticle_Struct_Prot"/>
</dbReference>
<dbReference type="InterPro" id="IPR000618">
    <property type="entry name" value="Insect_cuticle"/>
</dbReference>
<dbReference type="PANTHER" id="PTHR10380">
    <property type="entry name" value="CUTICLE PROTEIN"/>
    <property type="match status" value="1"/>
</dbReference>
<dbReference type="PANTHER" id="PTHR10380:SF173">
    <property type="entry name" value="CUTICULAR PROTEIN 47EF, ISOFORM C-RELATED"/>
    <property type="match status" value="1"/>
</dbReference>
<dbReference type="Pfam" id="PF00379">
    <property type="entry name" value="Chitin_bind_4"/>
    <property type="match status" value="1"/>
</dbReference>
<dbReference type="PRINTS" id="PR00947">
    <property type="entry name" value="CUTICLE"/>
</dbReference>
<dbReference type="PROSITE" id="PS00233">
    <property type="entry name" value="CHIT_BIND_RR_1"/>
    <property type="match status" value="1"/>
</dbReference>
<dbReference type="PROSITE" id="PS51155">
    <property type="entry name" value="CHIT_BIND_RR_2"/>
    <property type="match status" value="1"/>
</dbReference>
<proteinExistence type="evidence at protein level"/>
<sequence length="108" mass="12011">QFRPSVSRPDYKHIAIVSDNRYDNGDGNFGYDFETEHGINVEATGKPGSKGQSNIGGSYRFILPDGTTAEVRYFADELGYRAESPLIPTPHPLPAHAIEQIRFAESQR</sequence>
<organism>
    <name type="scientific">Cancer pagurus</name>
    <name type="common">Rock crab</name>
    <dbReference type="NCBI Taxonomy" id="6755"/>
    <lineage>
        <taxon>Eukaryota</taxon>
        <taxon>Metazoa</taxon>
        <taxon>Ecdysozoa</taxon>
        <taxon>Arthropoda</taxon>
        <taxon>Crustacea</taxon>
        <taxon>Multicrustacea</taxon>
        <taxon>Malacostraca</taxon>
        <taxon>Eumalacostraca</taxon>
        <taxon>Eucarida</taxon>
        <taxon>Decapoda</taxon>
        <taxon>Pleocyemata</taxon>
        <taxon>Brachyura</taxon>
        <taxon>Eubrachyura</taxon>
        <taxon>Cancroidea</taxon>
        <taxon>Cancridae</taxon>
        <taxon>Cancer</taxon>
    </lineage>
</organism>
<protein>
    <recommendedName>
        <fullName>Cuticle protein AM1199</fullName>
        <shortName>CPAM1199</shortName>
    </recommendedName>
</protein>
<accession>P81577</accession>
<feature type="chain" id="PRO_0000196158" description="Cuticle protein AM1199">
    <location>
        <begin position="1"/>
        <end position="108"/>
    </location>
</feature>
<feature type="domain" description="Chitin-binding type R&amp;R" evidence="1">
    <location>
        <begin position="26"/>
        <end position="91"/>
    </location>
</feature>
<feature type="modified residue" description="Pyrrolidone carboxylic acid" evidence="2">
    <location>
        <position position="1"/>
    </location>
</feature>
<feature type="glycosylation site" description="O-linked (HexNAc) threonine">
    <location>
        <position position="89"/>
    </location>
</feature>
<name>CUPA3_CANPG</name>
<reference key="1">
    <citation type="journal article" date="1999" name="Comp. Biochem. Physiol.">
        <title>Exoskeletal proteins from the crab, Cancer pagurus.</title>
        <authorList>
            <person name="Andersen S.O."/>
        </authorList>
    </citation>
    <scope>PROTEIN SEQUENCE</scope>
    <scope>PYROGLUTAMATE FORMATION AT GLN-1</scope>
    <scope>MASS SPECTROMETRY</scope>
    <source>
        <tissue>Carapace cuticle</tissue>
    </source>
</reference>
<keyword id="KW-0193">Cuticle</keyword>
<keyword id="KW-0903">Direct protein sequencing</keyword>
<keyword id="KW-0325">Glycoprotein</keyword>
<keyword id="KW-0873">Pyrrolidone carboxylic acid</keyword>
<evidence type="ECO:0000255" key="1">
    <source>
        <dbReference type="PROSITE-ProRule" id="PRU00497"/>
    </source>
</evidence>
<evidence type="ECO:0000269" key="2">
    <source>
    </source>
</evidence>
<comment type="tissue specificity">
    <text>Arthrodial membrane.</text>
</comment>
<comment type="mass spectrometry" mass="12190.5" method="MALDI" evidence="2"/>